<evidence type="ECO:0000250" key="1"/>
<evidence type="ECO:0000255" key="2"/>
<evidence type="ECO:0000269" key="3">
    <source>
    </source>
</evidence>
<evidence type="ECO:0000305" key="4"/>
<comment type="function">
    <text evidence="1">Involved in excretion of nitrite produced by the dissimilatory reduction of nitrate.</text>
</comment>
<comment type="subcellular location">
    <subcellularLocation>
        <location evidence="4">Cell membrane</location>
        <topology evidence="4">Multi-pass membrane protein</topology>
    </subcellularLocation>
</comment>
<comment type="induction">
    <text evidence="3">A member of the dormancy regulon. Induced in response to reduced oxygen tension (hypoxia) and low levels of nitric oxide (NO).</text>
</comment>
<comment type="similarity">
    <text evidence="4">Belongs to the major facilitator superfamily. Nitrate/nitrite porter (TC 2.A.1.8) family.</text>
</comment>
<proteinExistence type="evidence at transcript level"/>
<name>NARK2_MYCTO</name>
<keyword id="KW-1003">Cell membrane</keyword>
<keyword id="KW-0472">Membrane</keyword>
<keyword id="KW-0534">Nitrate assimilation</keyword>
<keyword id="KW-1185">Reference proteome</keyword>
<keyword id="KW-0812">Transmembrane</keyword>
<keyword id="KW-1133">Transmembrane helix</keyword>
<keyword id="KW-0813">Transport</keyword>
<reference key="1">
    <citation type="journal article" date="2002" name="J. Bacteriol.">
        <title>Whole-genome comparison of Mycobacterium tuberculosis clinical and laboratory strains.</title>
        <authorList>
            <person name="Fleischmann R.D."/>
            <person name="Alland D."/>
            <person name="Eisen J.A."/>
            <person name="Carpenter L."/>
            <person name="White O."/>
            <person name="Peterson J.D."/>
            <person name="DeBoy R.T."/>
            <person name="Dodson R.J."/>
            <person name="Gwinn M.L."/>
            <person name="Haft D.H."/>
            <person name="Hickey E.K."/>
            <person name="Kolonay J.F."/>
            <person name="Nelson W.C."/>
            <person name="Umayam L.A."/>
            <person name="Ermolaeva M.D."/>
            <person name="Salzberg S.L."/>
            <person name="Delcher A."/>
            <person name="Utterback T.R."/>
            <person name="Weidman J.F."/>
            <person name="Khouri H.M."/>
            <person name="Gill J."/>
            <person name="Mikula A."/>
            <person name="Bishai W."/>
            <person name="Jacobs W.R. Jr."/>
            <person name="Venter J.C."/>
            <person name="Fraser C.M."/>
        </authorList>
    </citation>
    <scope>NUCLEOTIDE SEQUENCE [LARGE SCALE GENOMIC DNA]</scope>
    <source>
        <strain>CDC 1551 / Oshkosh</strain>
    </source>
</reference>
<reference key="2">
    <citation type="journal article" date="2003" name="J. Exp. Med.">
        <title>Inhibition of respiration by nitric oxide induces a Mycobacterium tuberculosis dormancy program.</title>
        <authorList>
            <person name="Voskuil M.I."/>
            <person name="Schnappinger D."/>
            <person name="Visconti K.C."/>
            <person name="Harrell M.I."/>
            <person name="Dolganov G.M."/>
            <person name="Sherman D.R."/>
            <person name="Schoolnik G.K."/>
        </authorList>
    </citation>
    <scope>INDUCTION BY NITRIC OXIDE (NO) AND BY HYPOXIA</scope>
    <scope>DORMANCY REGULON</scope>
    <source>
        <strain>CDC 1551 / Oshkosh</strain>
    </source>
</reference>
<dbReference type="EMBL" id="AE000516">
    <property type="protein sequence ID" value="AAK46052.1"/>
    <property type="molecule type" value="Genomic_DNA"/>
</dbReference>
<dbReference type="PIR" id="D70688">
    <property type="entry name" value="D70688"/>
</dbReference>
<dbReference type="SMR" id="P9WJY6"/>
<dbReference type="KEGG" id="mtc:MT1779"/>
<dbReference type="PATRIC" id="fig|83331.31.peg.1909"/>
<dbReference type="HOGENOM" id="CLU_001265_14_0_11"/>
<dbReference type="Proteomes" id="UP000001020">
    <property type="component" value="Chromosome"/>
</dbReference>
<dbReference type="GO" id="GO:0005886">
    <property type="term" value="C:plasma membrane"/>
    <property type="evidence" value="ECO:0007669"/>
    <property type="project" value="UniProtKB-SubCell"/>
</dbReference>
<dbReference type="GO" id="GO:0015112">
    <property type="term" value="F:nitrate transmembrane transporter activity"/>
    <property type="evidence" value="ECO:0007669"/>
    <property type="project" value="InterPro"/>
</dbReference>
<dbReference type="GO" id="GO:0042128">
    <property type="term" value="P:nitrate assimilation"/>
    <property type="evidence" value="ECO:0007669"/>
    <property type="project" value="UniProtKB-KW"/>
</dbReference>
<dbReference type="CDD" id="cd17341">
    <property type="entry name" value="MFS_NRT2_like"/>
    <property type="match status" value="1"/>
</dbReference>
<dbReference type="Gene3D" id="1.20.1250.20">
    <property type="entry name" value="MFS general substrate transporter like domains"/>
    <property type="match status" value="2"/>
</dbReference>
<dbReference type="InterPro" id="IPR011701">
    <property type="entry name" value="MFS"/>
</dbReference>
<dbReference type="InterPro" id="IPR020846">
    <property type="entry name" value="MFS_dom"/>
</dbReference>
<dbReference type="InterPro" id="IPR036259">
    <property type="entry name" value="MFS_trans_sf"/>
</dbReference>
<dbReference type="InterPro" id="IPR044772">
    <property type="entry name" value="NO3_transporter"/>
</dbReference>
<dbReference type="PANTHER" id="PTHR23515">
    <property type="entry name" value="HIGH-AFFINITY NITRATE TRANSPORTER 2.3"/>
    <property type="match status" value="1"/>
</dbReference>
<dbReference type="Pfam" id="PF07690">
    <property type="entry name" value="MFS_1"/>
    <property type="match status" value="1"/>
</dbReference>
<dbReference type="SUPFAM" id="SSF103473">
    <property type="entry name" value="MFS general substrate transporter"/>
    <property type="match status" value="1"/>
</dbReference>
<dbReference type="PROSITE" id="PS50850">
    <property type="entry name" value="MFS"/>
    <property type="match status" value="1"/>
</dbReference>
<sequence length="395" mass="41109">MRGQAANLVLATWISVVNFWAWNLIGPLSTSYARDMSLSSAEASLLVATPILVGALGRIVTGPLTDRFGGRAMLIAVTLASILPVLAVGVAATMGSYALLVFFGLFLGVAGTIFAVGIPFANNWYQPARRGFSTGVFGMGMVGTALSAFFTPRFVRWFGLFTTHAIVAAALASTAVVAMVVLRDAPYFRPNADPVLPRLKAAARLPVTWEMSFLYAIVFGGFVAFSNYLPTYITTIYGFSTVDAGARTAGFALAAVLARPVGGWLSDRIAPRHVVLASLAGTALLAFAAALQPPPEVWSAATFITLAVCLGVGTGGVFAWVARRAPAASVGSVTGIVAAAGGLGGYFPPLVMGATYDPVDNDYTVGLLLLVATALVACTYTALHAREPVSEEASR</sequence>
<organism>
    <name type="scientific">Mycobacterium tuberculosis (strain CDC 1551 / Oshkosh)</name>
    <dbReference type="NCBI Taxonomy" id="83331"/>
    <lineage>
        <taxon>Bacteria</taxon>
        <taxon>Bacillati</taxon>
        <taxon>Actinomycetota</taxon>
        <taxon>Actinomycetes</taxon>
        <taxon>Mycobacteriales</taxon>
        <taxon>Mycobacteriaceae</taxon>
        <taxon>Mycobacterium</taxon>
        <taxon>Mycobacterium tuberculosis complex</taxon>
    </lineage>
</organism>
<feature type="chain" id="PRO_0000427748" description="Probable nitrate/nitrite transporter NarK2">
    <location>
        <begin position="1"/>
        <end position="395"/>
    </location>
</feature>
<feature type="transmembrane region" description="Helical" evidence="2">
    <location>
        <begin position="8"/>
        <end position="28"/>
    </location>
</feature>
<feature type="transmembrane region" description="Helical" evidence="2">
    <location>
        <begin position="45"/>
        <end position="65"/>
    </location>
</feature>
<feature type="transmembrane region" description="Helical" evidence="2">
    <location>
        <begin position="72"/>
        <end position="92"/>
    </location>
</feature>
<feature type="transmembrane region" description="Helical" evidence="2">
    <location>
        <begin position="98"/>
        <end position="118"/>
    </location>
</feature>
<feature type="transmembrane region" description="Helical" evidence="2">
    <location>
        <begin position="131"/>
        <end position="151"/>
    </location>
</feature>
<feature type="transmembrane region" description="Helical" evidence="2">
    <location>
        <begin position="157"/>
        <end position="177"/>
    </location>
</feature>
<feature type="transmembrane region" description="Helical" evidence="2">
    <location>
        <begin position="205"/>
        <end position="225"/>
    </location>
</feature>
<feature type="transmembrane region" description="Helical" evidence="2">
    <location>
        <begin position="244"/>
        <end position="266"/>
    </location>
</feature>
<feature type="transmembrane region" description="Helical" evidence="2">
    <location>
        <begin position="274"/>
        <end position="294"/>
    </location>
</feature>
<feature type="transmembrane region" description="Helical" evidence="2">
    <location>
        <begin position="301"/>
        <end position="321"/>
    </location>
</feature>
<feature type="transmembrane region" description="Helical" evidence="2">
    <location>
        <begin position="333"/>
        <end position="353"/>
    </location>
</feature>
<feature type="transmembrane region" description="Helical" evidence="2">
    <location>
        <begin position="365"/>
        <end position="385"/>
    </location>
</feature>
<protein>
    <recommendedName>
        <fullName>Probable nitrate/nitrite transporter NarK2</fullName>
    </recommendedName>
</protein>
<gene>
    <name type="primary">narK2</name>
    <name type="synonym">narK-3</name>
    <name type="ordered locus">MT1779</name>
</gene>
<accession>P9WJY6</accession>
<accession>L0TAG9</accession>
<accession>P71995</accession>
<accession>Q7D820</accession>